<name>TRUB_PSEU2</name>
<gene>
    <name evidence="1" type="primary">truB</name>
    <name type="ordered locus">Psyr_4178</name>
</gene>
<proteinExistence type="inferred from homology"/>
<reference key="1">
    <citation type="journal article" date="2005" name="Proc. Natl. Acad. Sci. U.S.A.">
        <title>Comparison of the complete genome sequences of Pseudomonas syringae pv. syringae B728a and pv. tomato DC3000.</title>
        <authorList>
            <person name="Feil H."/>
            <person name="Feil W.S."/>
            <person name="Chain P."/>
            <person name="Larimer F."/>
            <person name="Dibartolo G."/>
            <person name="Copeland A."/>
            <person name="Lykidis A."/>
            <person name="Trong S."/>
            <person name="Nolan M."/>
            <person name="Goltsman E."/>
            <person name="Thiel J."/>
            <person name="Malfatti S."/>
            <person name="Loper J.E."/>
            <person name="Lapidus A."/>
            <person name="Detter J.C."/>
            <person name="Land M."/>
            <person name="Richardson P.M."/>
            <person name="Kyrpides N.C."/>
            <person name="Ivanova N."/>
            <person name="Lindow S.E."/>
        </authorList>
    </citation>
    <scope>NUCLEOTIDE SEQUENCE [LARGE SCALE GENOMIC DNA]</scope>
    <source>
        <strain>B728a</strain>
    </source>
</reference>
<evidence type="ECO:0000255" key="1">
    <source>
        <dbReference type="HAMAP-Rule" id="MF_01080"/>
    </source>
</evidence>
<feature type="chain" id="PRO_0000229374" description="tRNA pseudouridine synthase B">
    <location>
        <begin position="1"/>
        <end position="305"/>
    </location>
</feature>
<feature type="active site" description="Nucleophile" evidence="1">
    <location>
        <position position="48"/>
    </location>
</feature>
<organism>
    <name type="scientific">Pseudomonas syringae pv. syringae (strain B728a)</name>
    <dbReference type="NCBI Taxonomy" id="205918"/>
    <lineage>
        <taxon>Bacteria</taxon>
        <taxon>Pseudomonadati</taxon>
        <taxon>Pseudomonadota</taxon>
        <taxon>Gammaproteobacteria</taxon>
        <taxon>Pseudomonadales</taxon>
        <taxon>Pseudomonadaceae</taxon>
        <taxon>Pseudomonas</taxon>
        <taxon>Pseudomonas syringae</taxon>
    </lineage>
</organism>
<comment type="function">
    <text evidence="1">Responsible for synthesis of pseudouridine from uracil-55 in the psi GC loop of transfer RNAs.</text>
</comment>
<comment type="catalytic activity">
    <reaction evidence="1">
        <text>uridine(55) in tRNA = pseudouridine(55) in tRNA</text>
        <dbReference type="Rhea" id="RHEA:42532"/>
        <dbReference type="Rhea" id="RHEA-COMP:10101"/>
        <dbReference type="Rhea" id="RHEA-COMP:10102"/>
        <dbReference type="ChEBI" id="CHEBI:65314"/>
        <dbReference type="ChEBI" id="CHEBI:65315"/>
        <dbReference type="EC" id="5.4.99.25"/>
    </reaction>
</comment>
<comment type="similarity">
    <text evidence="1">Belongs to the pseudouridine synthase TruB family. Type 1 subfamily.</text>
</comment>
<accession>Q4ZNR4</accession>
<keyword id="KW-0413">Isomerase</keyword>
<keyword id="KW-0819">tRNA processing</keyword>
<protein>
    <recommendedName>
        <fullName evidence="1">tRNA pseudouridine synthase B</fullName>
        <ecNumber evidence="1">5.4.99.25</ecNumber>
    </recommendedName>
    <alternativeName>
        <fullName evidence="1">tRNA pseudouridine(55) synthase</fullName>
        <shortName evidence="1">Psi55 synthase</shortName>
    </alternativeName>
    <alternativeName>
        <fullName evidence="1">tRNA pseudouridylate synthase</fullName>
    </alternativeName>
    <alternativeName>
        <fullName evidence="1">tRNA-uridine isomerase</fullName>
    </alternativeName>
</protein>
<dbReference type="EC" id="5.4.99.25" evidence="1"/>
<dbReference type="EMBL" id="CP000075">
    <property type="protein sequence ID" value="AAY39208.1"/>
    <property type="molecule type" value="Genomic_DNA"/>
</dbReference>
<dbReference type="RefSeq" id="WP_003400189.1">
    <property type="nucleotide sequence ID" value="NC_007005.1"/>
</dbReference>
<dbReference type="RefSeq" id="YP_237246.1">
    <property type="nucleotide sequence ID" value="NC_007005.1"/>
</dbReference>
<dbReference type="SMR" id="Q4ZNR4"/>
<dbReference type="STRING" id="205918.Psyr_4178"/>
<dbReference type="GeneID" id="65076840"/>
<dbReference type="KEGG" id="psb:Psyr_4178"/>
<dbReference type="PATRIC" id="fig|205918.7.peg.4305"/>
<dbReference type="eggNOG" id="COG0130">
    <property type="taxonomic scope" value="Bacteria"/>
</dbReference>
<dbReference type="HOGENOM" id="CLU_032087_0_3_6"/>
<dbReference type="OrthoDB" id="9802309at2"/>
<dbReference type="Proteomes" id="UP000000426">
    <property type="component" value="Chromosome"/>
</dbReference>
<dbReference type="GO" id="GO:0003723">
    <property type="term" value="F:RNA binding"/>
    <property type="evidence" value="ECO:0007669"/>
    <property type="project" value="InterPro"/>
</dbReference>
<dbReference type="GO" id="GO:0160148">
    <property type="term" value="F:tRNA pseudouridine(55) synthase activity"/>
    <property type="evidence" value="ECO:0007669"/>
    <property type="project" value="UniProtKB-EC"/>
</dbReference>
<dbReference type="GO" id="GO:1990481">
    <property type="term" value="P:mRNA pseudouridine synthesis"/>
    <property type="evidence" value="ECO:0007669"/>
    <property type="project" value="TreeGrafter"/>
</dbReference>
<dbReference type="GO" id="GO:0031119">
    <property type="term" value="P:tRNA pseudouridine synthesis"/>
    <property type="evidence" value="ECO:0007669"/>
    <property type="project" value="UniProtKB-UniRule"/>
</dbReference>
<dbReference type="CDD" id="cd02573">
    <property type="entry name" value="PseudoU_synth_EcTruB"/>
    <property type="match status" value="1"/>
</dbReference>
<dbReference type="CDD" id="cd21152">
    <property type="entry name" value="PUA_TruB_bacterial"/>
    <property type="match status" value="1"/>
</dbReference>
<dbReference type="FunFam" id="2.30.130.10:FF:000012">
    <property type="entry name" value="tRNA pseudouridine synthase B"/>
    <property type="match status" value="1"/>
</dbReference>
<dbReference type="FunFam" id="3.30.2350.10:FF:000011">
    <property type="entry name" value="tRNA pseudouridine synthase B"/>
    <property type="match status" value="1"/>
</dbReference>
<dbReference type="Gene3D" id="3.30.2350.10">
    <property type="entry name" value="Pseudouridine synthase"/>
    <property type="match status" value="1"/>
</dbReference>
<dbReference type="Gene3D" id="2.30.130.10">
    <property type="entry name" value="PUA domain"/>
    <property type="match status" value="1"/>
</dbReference>
<dbReference type="HAMAP" id="MF_01080">
    <property type="entry name" value="TruB_bact"/>
    <property type="match status" value="1"/>
</dbReference>
<dbReference type="InterPro" id="IPR020103">
    <property type="entry name" value="PsdUridine_synth_cat_dom_sf"/>
</dbReference>
<dbReference type="InterPro" id="IPR002501">
    <property type="entry name" value="PsdUridine_synth_N"/>
</dbReference>
<dbReference type="InterPro" id="IPR015947">
    <property type="entry name" value="PUA-like_sf"/>
</dbReference>
<dbReference type="InterPro" id="IPR036974">
    <property type="entry name" value="PUA_sf"/>
</dbReference>
<dbReference type="InterPro" id="IPR014780">
    <property type="entry name" value="tRNA_psdUridine_synth_TruB"/>
</dbReference>
<dbReference type="InterPro" id="IPR015240">
    <property type="entry name" value="tRNA_sdUridine_synth_fam1_C"/>
</dbReference>
<dbReference type="InterPro" id="IPR032819">
    <property type="entry name" value="TruB_C"/>
</dbReference>
<dbReference type="NCBIfam" id="TIGR00431">
    <property type="entry name" value="TruB"/>
    <property type="match status" value="1"/>
</dbReference>
<dbReference type="PANTHER" id="PTHR13767:SF2">
    <property type="entry name" value="PSEUDOURIDYLATE SYNTHASE TRUB1"/>
    <property type="match status" value="1"/>
</dbReference>
<dbReference type="PANTHER" id="PTHR13767">
    <property type="entry name" value="TRNA-PSEUDOURIDINE SYNTHASE"/>
    <property type="match status" value="1"/>
</dbReference>
<dbReference type="Pfam" id="PF09157">
    <property type="entry name" value="TruB-C_2"/>
    <property type="match status" value="1"/>
</dbReference>
<dbReference type="Pfam" id="PF16198">
    <property type="entry name" value="TruB_C_2"/>
    <property type="match status" value="1"/>
</dbReference>
<dbReference type="Pfam" id="PF01509">
    <property type="entry name" value="TruB_N"/>
    <property type="match status" value="1"/>
</dbReference>
<dbReference type="SUPFAM" id="SSF55120">
    <property type="entry name" value="Pseudouridine synthase"/>
    <property type="match status" value="1"/>
</dbReference>
<dbReference type="SUPFAM" id="SSF88697">
    <property type="entry name" value="PUA domain-like"/>
    <property type="match status" value="1"/>
</dbReference>
<sequence>MAQVKRIRRNVSGIILLDKPLGFTSNAALQKVRWLLNAEKAGHTGSLDPLATGVLPLCFGEATKFSQYLLDSDKSYETLAQLGKTTTTADSEGEVLLTRPVTVGRDDIEAALPHFRGQISQIPPMYSALKRDGQPLYKLARAGEVVEREPRSVTIARLELLACEGDTARLSVDCSKGTYIRTLVEDIGEKLGCGAYVAELRRTQAGPFTLAQTVTLEELEQVHADGGNEAVDRFLMPSDSGLLDWPLLKFSEHSSFYWLHGQPVRAPDAPKFGMVRVQDHEGRFIGIGEVAEDGRIAPRRLIRSE</sequence>